<comment type="function">
    <text evidence="3">Monocarboxylate-proton symporter; active in acidic-to-neutral pH range (PubMed:30455351). Transports formate, acetate and L-lactate (PubMed:30455351).</text>
</comment>
<comment type="catalytic activity">
    <reaction evidence="1">
        <text>(S)-lactate(in) + H(+)(in) = (S)-lactate(out) + H(+)(out)</text>
        <dbReference type="Rhea" id="RHEA:29415"/>
        <dbReference type="ChEBI" id="CHEBI:15378"/>
        <dbReference type="ChEBI" id="CHEBI:16651"/>
    </reaction>
</comment>
<comment type="catalytic activity">
    <reaction evidence="1">
        <text>formate(in) + H(+)(in) = formate(out) + H(+)(out)</text>
        <dbReference type="Rhea" id="RHEA:80887"/>
        <dbReference type="ChEBI" id="CHEBI:15378"/>
        <dbReference type="ChEBI" id="CHEBI:15740"/>
    </reaction>
</comment>
<comment type="catalytic activity">
    <reaction evidence="1">
        <text>pyruvate(out) + H(+)(out) = pyruvate(in) + H(+)(in)</text>
        <dbReference type="Rhea" id="RHEA:64720"/>
        <dbReference type="ChEBI" id="CHEBI:15361"/>
        <dbReference type="ChEBI" id="CHEBI:15378"/>
    </reaction>
</comment>
<comment type="catalytic activity">
    <reaction evidence="1">
        <text>acetate(out) + H(+)(out) = acetate(in) + H(+)(in)</text>
        <dbReference type="Rhea" id="RHEA:71803"/>
        <dbReference type="ChEBI" id="CHEBI:15378"/>
        <dbReference type="ChEBI" id="CHEBI:30089"/>
    </reaction>
</comment>
<comment type="subunit">
    <text evidence="3">Homopentamer.</text>
</comment>
<comment type="subcellular location">
    <subcellularLocation>
        <location evidence="2">Membrane</location>
        <topology evidence="2">Multi-pass membrane protein</topology>
    </subcellularLocation>
</comment>
<comment type="similarity">
    <text evidence="5">Belongs to the FNT transporter (TC 1.A.16) family.</text>
</comment>
<sequence>MPREKPRADEIAIEMMSVCEDETEVEQDPRELYEEEMKEQQQIDCSKQQKEVVAIEELEKRNINKHFFSIQPNTQIPVISSNYIAPVDTSRLLVLIGKTKATYPIMKMFSLSVLAGMLLSVGGLLSITIGKGIPSSDIGIQKIVFGFFNSVGLNLVVLCGGELFTSNCAFLIPGFMEGAYSRWLFFKTHFVVYFGNLVGSIFVSTYFGKLLGSFESPMYLSAVKQIGETKVAMNWGRALLSGIGCNWLVCCAVYFSASAKDLLSKLVVISFLVLTFASLEFENCVGNMFLLSLSHMYGGNFTLGQWILNNLIPVSIGNFIGGTFLLGIPLWYVHVSNVYNIPFLDPLYQQSQAKTQ</sequence>
<gene>
    <name evidence="6" type="ORF">EHI_198990</name>
</gene>
<reference evidence="6" key="1">
    <citation type="journal article" date="2005" name="Nature">
        <title>The genome of the protist parasite Entamoeba histolytica.</title>
        <authorList>
            <person name="Loftus B.J."/>
            <person name="Anderson I."/>
            <person name="Davies R."/>
            <person name="Alsmark U.C."/>
            <person name="Samuelson J."/>
            <person name="Amedeo P."/>
            <person name="Roncaglia P."/>
            <person name="Berriman M."/>
            <person name="Hirt R.P."/>
            <person name="Mann B.J."/>
            <person name="Nozaki T."/>
            <person name="Suh B."/>
            <person name="Pop M."/>
            <person name="Duchene M."/>
            <person name="Ackers J."/>
            <person name="Tannich E."/>
            <person name="Leippe M."/>
            <person name="Hofer M."/>
            <person name="Bruchhaus I."/>
            <person name="Willhoeft U."/>
            <person name="Bhattacharya A."/>
            <person name="Chillingworth T."/>
            <person name="Churcher C.M."/>
            <person name="Hance Z."/>
            <person name="Harris B."/>
            <person name="Harris D."/>
            <person name="Jagels K."/>
            <person name="Moule S."/>
            <person name="Mungall K.L."/>
            <person name="Ormond D."/>
            <person name="Squares R."/>
            <person name="Whitehead S."/>
            <person name="Quail M.A."/>
            <person name="Rabbinowitsch E."/>
            <person name="Norbertczak H."/>
            <person name="Price C."/>
            <person name="Wang Z."/>
            <person name="Guillen N."/>
            <person name="Gilchrist C."/>
            <person name="Stroup S.E."/>
            <person name="Bhattacharya S."/>
            <person name="Lohia A."/>
            <person name="Foster P.G."/>
            <person name="Sicheritz-Ponten T."/>
            <person name="Weber C."/>
            <person name="Singh U."/>
            <person name="Mukherjee C."/>
            <person name="El-Sayed N.M.A."/>
            <person name="Petri W.A."/>
            <person name="Clark C.G."/>
            <person name="Embley T.M."/>
            <person name="Barrell B.G."/>
            <person name="Fraser C.M."/>
            <person name="Hall N."/>
        </authorList>
    </citation>
    <scope>NUCLEOTIDE SEQUENCE [LARGE SCALE GENOMIC DNA]</scope>
    <source>
        <strain evidence="6">ATCC 30459 / HM-1:IMSS / ABRM</strain>
    </source>
</reference>
<reference evidence="5" key="2">
    <citation type="journal article" date="2019" name="J. Biol. Chem.">
        <title>Formate-nitrite transporters carrying nonprotonatable amide amino acids instead of a central histidine maintain pH-dependent transport.</title>
        <authorList>
            <person name="Helmstetter F."/>
            <person name="Arnold P."/>
            <person name="Hoeger B."/>
            <person name="Petersen L.M."/>
            <person name="Beitz E."/>
        </authorList>
    </citation>
    <scope>FUNCTION</scope>
    <scope>SUBUNIT</scope>
</reference>
<accession>C4LWU5</accession>
<accession>A0A175JI94</accession>
<dbReference type="EMBL" id="DS571165">
    <property type="protein sequence ID" value="EAL47918.1"/>
    <property type="molecule type" value="Genomic_DNA"/>
</dbReference>
<dbReference type="RefSeq" id="XP_653304.1">
    <property type="nucleotide sequence ID" value="XM_648212.1"/>
</dbReference>
<dbReference type="SMR" id="C4LWU5"/>
<dbReference type="TCDB" id="1.A.16.2.8">
    <property type="family name" value="the formate-nitrite transporter (fnt) family"/>
</dbReference>
<dbReference type="EnsemblProtists" id="GAT93188">
    <property type="protein sequence ID" value="GAT93188"/>
    <property type="gene ID" value="CL6EHI_198990"/>
</dbReference>
<dbReference type="EnsemblProtists" id="rna_EHI_198990-1">
    <property type="protein sequence ID" value="rna_EHI_198990-1"/>
    <property type="gene ID" value="EHI_198990"/>
</dbReference>
<dbReference type="GeneID" id="3407616"/>
<dbReference type="KEGG" id="ehi:EHI_198990"/>
<dbReference type="VEuPathDB" id="AmoebaDB:EHI5A_201460"/>
<dbReference type="VEuPathDB" id="AmoebaDB:EHI7A_149360"/>
<dbReference type="VEuPathDB" id="AmoebaDB:EHI8A_168380"/>
<dbReference type="VEuPathDB" id="AmoebaDB:EHI_198990"/>
<dbReference type="VEuPathDB" id="AmoebaDB:KM1_245660"/>
<dbReference type="eggNOG" id="ENOG502QUGF">
    <property type="taxonomic scope" value="Eukaryota"/>
</dbReference>
<dbReference type="HOGENOM" id="CLU_036896_1_1_1"/>
<dbReference type="InParanoid" id="C4LWU5"/>
<dbReference type="OMA" id="MIWFPIM"/>
<dbReference type="OrthoDB" id="26216at2759"/>
<dbReference type="Proteomes" id="UP000001926">
    <property type="component" value="Partially assembled WGS sequence"/>
</dbReference>
<dbReference type="GO" id="GO:0005886">
    <property type="term" value="C:plasma membrane"/>
    <property type="evidence" value="ECO:0000318"/>
    <property type="project" value="GO_Central"/>
</dbReference>
<dbReference type="GO" id="GO:0015513">
    <property type="term" value="F:high-affinity secondary active nitrite transmembrane transporter activity"/>
    <property type="evidence" value="ECO:0000318"/>
    <property type="project" value="GO_Central"/>
</dbReference>
<dbReference type="GO" id="GO:0015707">
    <property type="term" value="P:nitrite transport"/>
    <property type="evidence" value="ECO:0000318"/>
    <property type="project" value="GO_Central"/>
</dbReference>
<dbReference type="FunFam" id="1.20.1080.10:FF:000045">
    <property type="entry name" value="Formate/nitrite transporter family protein, putative"/>
    <property type="match status" value="1"/>
</dbReference>
<dbReference type="Gene3D" id="1.20.1080.10">
    <property type="entry name" value="Glycerol uptake facilitator protein"/>
    <property type="match status" value="1"/>
</dbReference>
<dbReference type="InterPro" id="IPR023271">
    <property type="entry name" value="Aquaporin-like"/>
</dbReference>
<dbReference type="InterPro" id="IPR000292">
    <property type="entry name" value="For/NO2_transpt"/>
</dbReference>
<dbReference type="InterPro" id="IPR024002">
    <property type="entry name" value="For/NO2_transpt_CS"/>
</dbReference>
<dbReference type="PANTHER" id="PTHR30520">
    <property type="entry name" value="FORMATE TRANSPORTER-RELATED"/>
    <property type="match status" value="1"/>
</dbReference>
<dbReference type="PANTHER" id="PTHR30520:SF6">
    <property type="entry name" value="FORMATE_NITRATE FAMILY TRANSPORTER (EUROFUNG)"/>
    <property type="match status" value="1"/>
</dbReference>
<dbReference type="Pfam" id="PF01226">
    <property type="entry name" value="Form_Nir_trans"/>
    <property type="match status" value="1"/>
</dbReference>
<dbReference type="PROSITE" id="PS01005">
    <property type="entry name" value="FORMATE_NITRITE_TP_1"/>
    <property type="match status" value="1"/>
</dbReference>
<feature type="chain" id="PRO_0000461322" description="Formate-nitrite transporter">
    <location>
        <begin position="1"/>
        <end position="356"/>
    </location>
</feature>
<feature type="topological domain" description="Cytoplasmic" evidence="5">
    <location>
        <begin position="1"/>
        <end position="108"/>
    </location>
</feature>
<feature type="transmembrane region" description="Helical" evidence="2">
    <location>
        <begin position="109"/>
        <end position="129"/>
    </location>
</feature>
<feature type="topological domain" description="Extracellular" evidence="5">
    <location>
        <begin position="130"/>
        <end position="142"/>
    </location>
</feature>
<feature type="transmembrane region" description="Helical" evidence="2">
    <location>
        <begin position="143"/>
        <end position="163"/>
    </location>
</feature>
<feature type="topological domain" description="Cytoplasmic" evidence="5">
    <location>
        <begin position="164"/>
        <end position="182"/>
    </location>
</feature>
<feature type="transmembrane region" description="Helical" evidence="2">
    <location>
        <begin position="183"/>
        <end position="203"/>
    </location>
</feature>
<feature type="topological domain" description="Extracellular" evidence="5">
    <location>
        <begin position="204"/>
        <end position="237"/>
    </location>
</feature>
<feature type="transmembrane region" description="Helical" evidence="2">
    <location>
        <begin position="238"/>
        <end position="258"/>
    </location>
</feature>
<feature type="topological domain" description="Cytoplasmic" evidence="5">
    <location>
        <begin position="259"/>
        <end position="265"/>
    </location>
</feature>
<feature type="transmembrane region" description="Helical" evidence="2">
    <location>
        <begin position="266"/>
        <end position="286"/>
    </location>
</feature>
<feature type="topological domain" description="Extracellular" evidence="5">
    <location>
        <begin position="287"/>
        <end position="310"/>
    </location>
</feature>
<feature type="transmembrane region" description="Helical" evidence="2">
    <location>
        <begin position="311"/>
        <end position="331"/>
    </location>
</feature>
<feature type="topological domain" description="Cytoplasmic" evidence="5">
    <location>
        <begin position="332"/>
        <end position="356"/>
    </location>
</feature>
<organism evidence="7">
    <name type="scientific">Entamoeba histolytica (strain ATCC 30459 / HM-1:IMSS / ABRM)</name>
    <dbReference type="NCBI Taxonomy" id="294381"/>
    <lineage>
        <taxon>Eukaryota</taxon>
        <taxon>Amoebozoa</taxon>
        <taxon>Evosea</taxon>
        <taxon>Archamoebae</taxon>
        <taxon>Mastigamoebida</taxon>
        <taxon>Entamoebidae</taxon>
        <taxon>Entamoeba</taxon>
    </lineage>
</organism>
<proteinExistence type="evidence at protein level"/>
<name>FNT_ENTH1</name>
<protein>
    <recommendedName>
        <fullName evidence="4">Formate-nitrite transporter</fullName>
        <shortName evidence="4">EhFNT</shortName>
    </recommendedName>
</protein>
<evidence type="ECO:0000250" key="1">
    <source>
        <dbReference type="UniProtKB" id="O77389"/>
    </source>
</evidence>
<evidence type="ECO:0000255" key="2"/>
<evidence type="ECO:0000269" key="3">
    <source>
    </source>
</evidence>
<evidence type="ECO:0000303" key="4">
    <source>
    </source>
</evidence>
<evidence type="ECO:0000305" key="5"/>
<evidence type="ECO:0000312" key="6">
    <source>
        <dbReference type="EMBL" id="EAL47918.1"/>
    </source>
</evidence>
<evidence type="ECO:0000312" key="7">
    <source>
        <dbReference type="Proteomes" id="UP000001926"/>
    </source>
</evidence>
<keyword id="KW-0472">Membrane</keyword>
<keyword id="KW-1185">Reference proteome</keyword>
<keyword id="KW-0812">Transmembrane</keyword>
<keyword id="KW-1133">Transmembrane helix</keyword>
<keyword id="KW-0813">Transport</keyword>